<sequence length="461" mass="52795">MILCSYWHVGLVLLLFSCCGLVLGSEHETRLVANLLENYNKVIRPVEHHTHFVDITVGLQLIQLINVDEVNQIVETNVRLRQQWIDVRLRWNPADYGGIKKIRLPSDDVWLPDLVLYNNADGDFAIVHMTKLLLDYTGKIMWTPPAIFKSYCEIIVTHFPFDQQNCTMKLGIWTYDGTKVSISPESDRPDLSTFMESGEWVMKDYRGWKHWVYYTCCPDTPYLDITYHFIMQRIPLYFVVNVIIPCLLFSFLTVLVFYLPTDSGEKMTLSISVLLSLTVFLLVIVELIPSTSSAVPLIGKYMLFTMIFVISSIIVTVVVINTHHRSPSTHTMPQWVRKIFINTIPNVMFFSTMKRASKEKQENKIFADDIDISDISGKQVTGEVIFQTPLIKNPDVKSAIEGVKYIAEHMKSDEESSNAAEEWKYVAMVIDHILLCVFMLICIIGTVSVFAGRLIELSQEG</sequence>
<reference key="1">
    <citation type="journal article" date="1982" name="Nucleic Acids Res.">
        <title>The molecular cloning and characterisation of cDNA coding for the alpha subunit of the acetylcholine receptor.</title>
        <authorList>
            <person name="Sumikawa K."/>
            <person name="Houghton M."/>
            <person name="Smith J.C."/>
            <person name="Bell L."/>
            <person name="Richards B.M."/>
            <person name="Barnard E.A."/>
        </authorList>
    </citation>
    <scope>NUCLEOTIDE SEQUENCE [MRNA] OF 1-335 AND 341-411</scope>
</reference>
<reference key="2">
    <citation type="journal article" date="1983" name="Proc. Natl. Acad. Sci. U.S.A.">
        <title>Complete mRNA coding sequence of the acetylcholine binding alpha-subunit of Torpedo marmorata acetylcholine receptor: a model for the transmembrane organization of the polypeptide chain.</title>
        <authorList>
            <person name="Devillers-Thiery A."/>
            <person name="Giraudat J."/>
            <person name="Bentaboulet M."/>
            <person name="Changeux J.-P."/>
        </authorList>
    </citation>
    <scope>NUCLEOTIDE SEQUENCE [MRNA]</scope>
</reference>
<reference key="3">
    <citation type="journal article" date="1984" name="Adv. Exp. Med. Biol.">
        <title>Molecular genetics of Torpedo marmorata acetylcholine receptor.</title>
        <authorList>
            <person name="Devillers-Thiery A."/>
            <person name="Giraudat J."/>
            <person name="Bentaboulet M."/>
            <person name="Klarsfeld A."/>
            <person name="Changeux J.-P."/>
        </authorList>
    </citation>
    <scope>NUCLEOTIDE SEQUENCE [MRNA]</scope>
</reference>
<reference key="4">
    <citation type="journal article" date="1983" name="Cold Spring Harb. Symp. Quant. Biol.">
        <title>Acetylcholine and GABA receptors: subunits of central and peripheral receptors and their encoding nucleic acids.</title>
        <authorList>
            <person name="Barnard E.A."/>
            <person name="Beeson D."/>
            <person name="Bilbe G."/>
            <person name="Brown D.A."/>
            <person name="Constanti A."/>
            <person name="Conti-Tronconi B.M."/>
            <person name="Dolly J.O."/>
            <person name="Dunn S.M.J."/>
            <person name="Mehraban F."/>
            <person name="Richards B.M."/>
            <person name="Smart T.G."/>
        </authorList>
    </citation>
    <scope>NUCLEOTIDE SEQUENCE [MRNA] OF 1-79</scope>
</reference>
<reference key="5">
    <citation type="journal article" date="2003" name="Nature">
        <title>Structure and gating mechanism of the acetylcholine receptor pore.</title>
        <authorList>
            <person name="Miyazawa A."/>
            <person name="Fujiyoshi Y."/>
            <person name="Unwin N."/>
        </authorList>
    </citation>
    <scope>STRUCTURE BY ELECTRON MICROSCOPY (4.0 ANGSTROMS) OF 235-461</scope>
</reference>
<reference key="6">
    <citation type="journal article" date="2002" name="Neuron">
        <title>The mechanism for acetylcholine receptor inhibition by alpha-neurotoxins and species-specific resistance to alpha-bungarotoxin revealed by NMR.</title>
        <authorList>
            <person name="Samson A.O."/>
            <person name="Scherf T."/>
            <person name="Eisenstein M."/>
            <person name="Chill J.H."/>
            <person name="Anglister J."/>
        </authorList>
    </citation>
    <scope>STRUCTURE BY NMR OF 206-228 IN COMPLEX WITH ALPHA-BUNGAROTOXIN</scope>
</reference>
<keyword id="KW-0002">3D-structure</keyword>
<keyword id="KW-1003">Cell membrane</keyword>
<keyword id="KW-1015">Disulfide bond</keyword>
<keyword id="KW-0325">Glycoprotein</keyword>
<keyword id="KW-0407">Ion channel</keyword>
<keyword id="KW-0406">Ion transport</keyword>
<keyword id="KW-1071">Ligand-gated ion channel</keyword>
<keyword id="KW-0472">Membrane</keyword>
<keyword id="KW-0628">Postsynaptic cell membrane</keyword>
<keyword id="KW-0675">Receptor</keyword>
<keyword id="KW-0732">Signal</keyword>
<keyword id="KW-0770">Synapse</keyword>
<keyword id="KW-0812">Transmembrane</keyword>
<keyword id="KW-1133">Transmembrane helix</keyword>
<keyword id="KW-0813">Transport</keyword>
<evidence type="ECO:0000250" key="1">
    <source>
        <dbReference type="UniProtKB" id="P02708"/>
    </source>
</evidence>
<evidence type="ECO:0000250" key="2">
    <source>
        <dbReference type="UniProtKB" id="P02709"/>
    </source>
</evidence>
<evidence type="ECO:0000255" key="3"/>
<evidence type="ECO:0000269" key="4">
    <source>
    </source>
</evidence>
<evidence type="ECO:0000305" key="5"/>
<evidence type="ECO:0007829" key="6">
    <source>
        <dbReference type="PDB" id="1L4W"/>
    </source>
</evidence>
<dbReference type="EMBL" id="J00963">
    <property type="status" value="NOT_ANNOTATED_CDS"/>
    <property type="molecule type" value="mRNA"/>
</dbReference>
<dbReference type="EMBL" id="M25893">
    <property type="protein sequence ID" value="AAA96704.1"/>
    <property type="molecule type" value="mRNA"/>
</dbReference>
<dbReference type="EMBL" id="M14807">
    <property type="protein sequence ID" value="AAA49273.1"/>
    <property type="molecule type" value="mRNA"/>
</dbReference>
<dbReference type="PIR" id="A93440">
    <property type="entry name" value="A93440"/>
</dbReference>
<dbReference type="PIR" id="I50548">
    <property type="entry name" value="I50548"/>
</dbReference>
<dbReference type="PIR" id="I50549">
    <property type="entry name" value="I50549"/>
</dbReference>
<dbReference type="PDB" id="1L4W">
    <property type="method" value="NMR"/>
    <property type="chains" value="B=206-226"/>
</dbReference>
<dbReference type="PDB" id="1LJZ">
    <property type="method" value="NMR"/>
    <property type="chains" value="B=206-226"/>
</dbReference>
<dbReference type="PDB" id="1OED">
    <property type="method" value="EM"/>
    <property type="resolution" value="4.00 A"/>
    <property type="chains" value="A/D=235-461"/>
</dbReference>
<dbReference type="PDB" id="2BG9">
    <property type="method" value="EM"/>
    <property type="resolution" value="4.00 A"/>
    <property type="chains" value="A/D=25-461"/>
</dbReference>
<dbReference type="PDB" id="4AQ5">
    <property type="method" value="EM"/>
    <property type="resolution" value="6.20 A"/>
    <property type="chains" value="A/D=1-461"/>
</dbReference>
<dbReference type="PDB" id="4AQ9">
    <property type="method" value="EM"/>
    <property type="resolution" value="6.20 A"/>
    <property type="chains" value="A/D=1-461"/>
</dbReference>
<dbReference type="PDB" id="4BOG">
    <property type="method" value="EM"/>
    <property type="resolution" value="50.00 A"/>
    <property type="chains" value="2/A/D/F/I/K/N/P/S/U/X/Z=1-461"/>
</dbReference>
<dbReference type="PDB" id="4BOI">
    <property type="method" value="EM"/>
    <property type="resolution" value="41.00 A"/>
    <property type="chains" value="A/D=1-461"/>
</dbReference>
<dbReference type="PDB" id="4BON">
    <property type="method" value="EM"/>
    <property type="resolution" value="40.00 A"/>
    <property type="chains" value="A/D=1-461"/>
</dbReference>
<dbReference type="PDB" id="4BOO">
    <property type="method" value="EM"/>
    <property type="resolution" value="42.00 A"/>
    <property type="chains" value="A/D=1-461"/>
</dbReference>
<dbReference type="PDB" id="4BOR">
    <property type="method" value="EM"/>
    <property type="resolution" value="42.00 A"/>
    <property type="chains" value="A/D=1-461"/>
</dbReference>
<dbReference type="PDB" id="4BOT">
    <property type="method" value="EM"/>
    <property type="resolution" value="42.00 A"/>
    <property type="chains" value="A/D=1-461"/>
</dbReference>
<dbReference type="PDBsum" id="1L4W"/>
<dbReference type="PDBsum" id="1LJZ"/>
<dbReference type="PDBsum" id="1OED"/>
<dbReference type="PDBsum" id="2BG9"/>
<dbReference type="PDBsum" id="4AQ5"/>
<dbReference type="PDBsum" id="4AQ9"/>
<dbReference type="PDBsum" id="4BOG"/>
<dbReference type="PDBsum" id="4BOI"/>
<dbReference type="PDBsum" id="4BON"/>
<dbReference type="PDBsum" id="4BOO"/>
<dbReference type="PDBsum" id="4BOR"/>
<dbReference type="PDBsum" id="4BOT"/>
<dbReference type="EMDB" id="EMD-2071"/>
<dbReference type="EMDB" id="EMD-2072"/>
<dbReference type="EMDB" id="EMD-2376"/>
<dbReference type="EMDB" id="EMD-2377"/>
<dbReference type="EMDB" id="EMD-2378"/>
<dbReference type="EMDB" id="EMD-2381"/>
<dbReference type="EMDB" id="EMD-2382"/>
<dbReference type="EMDB" id="EMD-2383"/>
<dbReference type="SMR" id="P02711"/>
<dbReference type="ComplexPortal" id="CPX-2635">
    <property type="entry name" value="Acetylcholine receptor, alpha1-beta1-gamma-delta"/>
</dbReference>
<dbReference type="GlyCosmos" id="P02711">
    <property type="glycosylation" value="1 site, No reported glycans"/>
</dbReference>
<dbReference type="EvolutionaryTrace" id="P02711"/>
<dbReference type="GO" id="GO:0045211">
    <property type="term" value="C:postsynaptic membrane"/>
    <property type="evidence" value="ECO:0007669"/>
    <property type="project" value="UniProtKB-SubCell"/>
</dbReference>
<dbReference type="GO" id="GO:0022848">
    <property type="term" value="F:acetylcholine-gated monoatomic cation-selective channel activity"/>
    <property type="evidence" value="ECO:0007669"/>
    <property type="project" value="InterPro"/>
</dbReference>
<dbReference type="GO" id="GO:0004888">
    <property type="term" value="F:transmembrane signaling receptor activity"/>
    <property type="evidence" value="ECO:0007669"/>
    <property type="project" value="InterPro"/>
</dbReference>
<dbReference type="CDD" id="cd19014">
    <property type="entry name" value="LGIC_ECD_nAChR_A1"/>
    <property type="match status" value="1"/>
</dbReference>
<dbReference type="CDD" id="cd19064">
    <property type="entry name" value="LGIC_TM_nAChR"/>
    <property type="match status" value="1"/>
</dbReference>
<dbReference type="FunFam" id="1.20.58.390:FF:000013">
    <property type="entry name" value="Putative acetylcholine receptor subunit alpha"/>
    <property type="match status" value="1"/>
</dbReference>
<dbReference type="FunFam" id="1.20.58.390:FF:000016">
    <property type="entry name" value="Putative acetylcholine receptor subunit alpha"/>
    <property type="match status" value="1"/>
</dbReference>
<dbReference type="FunFam" id="2.70.170.10:FF:000019">
    <property type="entry name" value="Putative acetylcholine receptor subunit alpha"/>
    <property type="match status" value="1"/>
</dbReference>
<dbReference type="Gene3D" id="2.70.170.10">
    <property type="entry name" value="Neurotransmitter-gated ion-channel ligand-binding domain"/>
    <property type="match status" value="1"/>
</dbReference>
<dbReference type="Gene3D" id="1.20.58.390">
    <property type="entry name" value="Neurotransmitter-gated ion-channel transmembrane domain"/>
    <property type="match status" value="2"/>
</dbReference>
<dbReference type="InterPro" id="IPR006202">
    <property type="entry name" value="Neur_chan_lig-bd"/>
</dbReference>
<dbReference type="InterPro" id="IPR036734">
    <property type="entry name" value="Neur_chan_lig-bd_sf"/>
</dbReference>
<dbReference type="InterPro" id="IPR006201">
    <property type="entry name" value="Neur_channel"/>
</dbReference>
<dbReference type="InterPro" id="IPR036719">
    <property type="entry name" value="Neuro-gated_channel_TM_sf"/>
</dbReference>
<dbReference type="InterPro" id="IPR038050">
    <property type="entry name" value="Neuro_actylchol_rec"/>
</dbReference>
<dbReference type="InterPro" id="IPR006029">
    <property type="entry name" value="Neurotrans-gated_channel_TM"/>
</dbReference>
<dbReference type="InterPro" id="IPR018000">
    <property type="entry name" value="Neurotransmitter_ion_chnl_CS"/>
</dbReference>
<dbReference type="InterPro" id="IPR002394">
    <property type="entry name" value="Nicotinic_acetylcholine_rcpt"/>
</dbReference>
<dbReference type="NCBIfam" id="TIGR00860">
    <property type="entry name" value="LIC"/>
    <property type="match status" value="1"/>
</dbReference>
<dbReference type="PANTHER" id="PTHR18945">
    <property type="entry name" value="NEUROTRANSMITTER GATED ION CHANNEL"/>
    <property type="match status" value="1"/>
</dbReference>
<dbReference type="Pfam" id="PF02931">
    <property type="entry name" value="Neur_chan_LBD"/>
    <property type="match status" value="1"/>
</dbReference>
<dbReference type="Pfam" id="PF02932">
    <property type="entry name" value="Neur_chan_memb"/>
    <property type="match status" value="1"/>
</dbReference>
<dbReference type="PRINTS" id="PR00254">
    <property type="entry name" value="NICOTINICR"/>
</dbReference>
<dbReference type="PRINTS" id="PR00252">
    <property type="entry name" value="NRIONCHANNEL"/>
</dbReference>
<dbReference type="SUPFAM" id="SSF90112">
    <property type="entry name" value="Neurotransmitter-gated ion-channel transmembrane pore"/>
    <property type="match status" value="1"/>
</dbReference>
<dbReference type="SUPFAM" id="SSF63712">
    <property type="entry name" value="Nicotinic receptor ligand binding domain-like"/>
    <property type="match status" value="1"/>
</dbReference>
<dbReference type="PROSITE" id="PS00236">
    <property type="entry name" value="NEUROTR_ION_CHANNEL"/>
    <property type="match status" value="1"/>
</dbReference>
<accession>P02711</accession>
<comment type="function">
    <text evidence="1">Upon acetylcholine binding, the AChR responds by an extensive change in conformation that affects all subunits and leads to opening of an ion-conducting channel across the plasma membrane.</text>
</comment>
<comment type="catalytic activity">
    <reaction evidence="2">
        <text>K(+)(in) = K(+)(out)</text>
        <dbReference type="Rhea" id="RHEA:29463"/>
        <dbReference type="ChEBI" id="CHEBI:29103"/>
    </reaction>
</comment>
<comment type="catalytic activity">
    <reaction evidence="2">
        <text>Na(+)(in) = Na(+)(out)</text>
        <dbReference type="Rhea" id="RHEA:34963"/>
        <dbReference type="ChEBI" id="CHEBI:29101"/>
    </reaction>
</comment>
<comment type="subunit">
    <text evidence="4">Pentamer of two alpha chains, and one each of the beta, delta, and gamma chains.</text>
</comment>
<comment type="subcellular location">
    <subcellularLocation>
        <location evidence="1">Postsynaptic cell membrane</location>
        <topology evidence="3">Multi-pass membrane protein</topology>
    </subcellularLocation>
    <subcellularLocation>
        <location evidence="1">Cell membrane</location>
        <topology evidence="3">Multi-pass membrane protein</topology>
    </subcellularLocation>
</comment>
<comment type="similarity">
    <text evidence="5">Belongs to the ligand-gated ion channel (TC 1.A.9) family. Acetylcholine receptor (TC 1.A.9.1) subfamily. Alpha-1/CHRNA1 sub-subfamily.</text>
</comment>
<feature type="signal peptide">
    <location>
        <begin position="1"/>
        <end position="24"/>
    </location>
</feature>
<feature type="chain" id="PRO_0000000311" description="Acetylcholine receptor subunit alpha">
    <location>
        <begin position="25"/>
        <end position="461"/>
    </location>
</feature>
<feature type="topological domain" description="Extracellular">
    <location>
        <begin position="25"/>
        <end position="234"/>
    </location>
</feature>
<feature type="transmembrane region" description="Helical">
    <location>
        <begin position="235"/>
        <end position="259"/>
    </location>
</feature>
<feature type="transmembrane region" description="Helical">
    <location>
        <begin position="267"/>
        <end position="285"/>
    </location>
</feature>
<feature type="transmembrane region" description="Helical">
    <location>
        <begin position="301"/>
        <end position="320"/>
    </location>
</feature>
<feature type="topological domain" description="Cytoplasmic">
    <location>
        <begin position="321"/>
        <end position="432"/>
    </location>
</feature>
<feature type="transmembrane region" description="Helical">
    <location>
        <begin position="433"/>
        <end position="451"/>
    </location>
</feature>
<feature type="glycosylation site" description="N-linked (GlcNAc...) asparagine" evidence="3">
    <location>
        <position position="165"/>
    </location>
</feature>
<feature type="disulfide bond">
    <location>
        <begin position="152"/>
        <end position="166"/>
    </location>
</feature>
<feature type="disulfide bond" description="Associated with receptor activation">
    <location>
        <begin position="216"/>
        <end position="217"/>
    </location>
</feature>
<feature type="sequence conflict" description="In Ref. 3; AAA96704." evidence="5" ref="3">
    <original>V</original>
    <variation>L</variation>
    <location>
        <position position="347"/>
    </location>
</feature>
<feature type="sequence conflict" description="In Ref. 3; AAA96704." evidence="5" ref="3">
    <original>S</original>
    <variation>C</variation>
    <location>
        <position position="448"/>
    </location>
</feature>
<feature type="strand" evidence="6">
    <location>
        <begin position="210"/>
        <end position="215"/>
    </location>
</feature>
<feature type="strand" evidence="6">
    <location>
        <begin position="218"/>
        <end position="220"/>
    </location>
</feature>
<feature type="strand" evidence="6">
    <location>
        <begin position="222"/>
        <end position="225"/>
    </location>
</feature>
<proteinExistence type="evidence at protein level"/>
<organism>
    <name type="scientific">Torpedo marmorata</name>
    <name type="common">Marbled electric ray</name>
    <dbReference type="NCBI Taxonomy" id="7788"/>
    <lineage>
        <taxon>Eukaryota</taxon>
        <taxon>Metazoa</taxon>
        <taxon>Chordata</taxon>
        <taxon>Craniata</taxon>
        <taxon>Vertebrata</taxon>
        <taxon>Chondrichthyes</taxon>
        <taxon>Elasmobranchii</taxon>
        <taxon>Batoidea</taxon>
        <taxon>Torpediniformes</taxon>
        <taxon>Torpedinidae</taxon>
        <taxon>Torpedo</taxon>
    </lineage>
</organism>
<gene>
    <name type="primary">CHRNA1</name>
</gene>
<name>ACHA_TORMA</name>
<protein>
    <recommendedName>
        <fullName>Acetylcholine receptor subunit alpha</fullName>
    </recommendedName>
</protein>